<dbReference type="EC" id="3.1.26.3" evidence="1"/>
<dbReference type="EMBL" id="CP000746">
    <property type="protein sequence ID" value="ABR73955.1"/>
    <property type="molecule type" value="Genomic_DNA"/>
</dbReference>
<dbReference type="RefSeq" id="WP_012072335.1">
    <property type="nucleotide sequence ID" value="NC_009655.1"/>
</dbReference>
<dbReference type="SMR" id="A6VLV8"/>
<dbReference type="STRING" id="339671.Asuc_0580"/>
<dbReference type="KEGG" id="asu:Asuc_0580"/>
<dbReference type="eggNOG" id="COG0571">
    <property type="taxonomic scope" value="Bacteria"/>
</dbReference>
<dbReference type="HOGENOM" id="CLU_000907_1_1_6"/>
<dbReference type="OrthoDB" id="9805026at2"/>
<dbReference type="Proteomes" id="UP000001114">
    <property type="component" value="Chromosome"/>
</dbReference>
<dbReference type="GO" id="GO:0005737">
    <property type="term" value="C:cytoplasm"/>
    <property type="evidence" value="ECO:0007669"/>
    <property type="project" value="UniProtKB-SubCell"/>
</dbReference>
<dbReference type="GO" id="GO:0003725">
    <property type="term" value="F:double-stranded RNA binding"/>
    <property type="evidence" value="ECO:0007669"/>
    <property type="project" value="TreeGrafter"/>
</dbReference>
<dbReference type="GO" id="GO:0046872">
    <property type="term" value="F:metal ion binding"/>
    <property type="evidence" value="ECO:0007669"/>
    <property type="project" value="UniProtKB-KW"/>
</dbReference>
<dbReference type="GO" id="GO:0004525">
    <property type="term" value="F:ribonuclease III activity"/>
    <property type="evidence" value="ECO:0007669"/>
    <property type="project" value="UniProtKB-UniRule"/>
</dbReference>
<dbReference type="GO" id="GO:0019843">
    <property type="term" value="F:rRNA binding"/>
    <property type="evidence" value="ECO:0007669"/>
    <property type="project" value="UniProtKB-KW"/>
</dbReference>
<dbReference type="GO" id="GO:0006397">
    <property type="term" value="P:mRNA processing"/>
    <property type="evidence" value="ECO:0007669"/>
    <property type="project" value="UniProtKB-UniRule"/>
</dbReference>
<dbReference type="GO" id="GO:0010468">
    <property type="term" value="P:regulation of gene expression"/>
    <property type="evidence" value="ECO:0007669"/>
    <property type="project" value="TreeGrafter"/>
</dbReference>
<dbReference type="GO" id="GO:0006364">
    <property type="term" value="P:rRNA processing"/>
    <property type="evidence" value="ECO:0007669"/>
    <property type="project" value="UniProtKB-UniRule"/>
</dbReference>
<dbReference type="GO" id="GO:0008033">
    <property type="term" value="P:tRNA processing"/>
    <property type="evidence" value="ECO:0007669"/>
    <property type="project" value="UniProtKB-KW"/>
</dbReference>
<dbReference type="CDD" id="cd10845">
    <property type="entry name" value="DSRM_RNAse_III_family"/>
    <property type="match status" value="1"/>
</dbReference>
<dbReference type="CDD" id="cd00593">
    <property type="entry name" value="RIBOc"/>
    <property type="match status" value="1"/>
</dbReference>
<dbReference type="FunFam" id="1.10.1520.10:FF:000001">
    <property type="entry name" value="Ribonuclease 3"/>
    <property type="match status" value="1"/>
</dbReference>
<dbReference type="FunFam" id="3.30.160.20:FF:000003">
    <property type="entry name" value="Ribonuclease 3"/>
    <property type="match status" value="1"/>
</dbReference>
<dbReference type="Gene3D" id="3.30.160.20">
    <property type="match status" value="1"/>
</dbReference>
<dbReference type="Gene3D" id="1.10.1520.10">
    <property type="entry name" value="Ribonuclease III domain"/>
    <property type="match status" value="1"/>
</dbReference>
<dbReference type="HAMAP" id="MF_00104">
    <property type="entry name" value="RNase_III"/>
    <property type="match status" value="1"/>
</dbReference>
<dbReference type="InterPro" id="IPR014720">
    <property type="entry name" value="dsRBD_dom"/>
</dbReference>
<dbReference type="InterPro" id="IPR011907">
    <property type="entry name" value="RNase_III"/>
</dbReference>
<dbReference type="InterPro" id="IPR000999">
    <property type="entry name" value="RNase_III_dom"/>
</dbReference>
<dbReference type="InterPro" id="IPR036389">
    <property type="entry name" value="RNase_III_sf"/>
</dbReference>
<dbReference type="NCBIfam" id="TIGR02191">
    <property type="entry name" value="RNaseIII"/>
    <property type="match status" value="1"/>
</dbReference>
<dbReference type="PANTHER" id="PTHR11207:SF0">
    <property type="entry name" value="RIBONUCLEASE 3"/>
    <property type="match status" value="1"/>
</dbReference>
<dbReference type="PANTHER" id="PTHR11207">
    <property type="entry name" value="RIBONUCLEASE III"/>
    <property type="match status" value="1"/>
</dbReference>
<dbReference type="Pfam" id="PF00035">
    <property type="entry name" value="dsrm"/>
    <property type="match status" value="1"/>
</dbReference>
<dbReference type="Pfam" id="PF14622">
    <property type="entry name" value="Ribonucleas_3_3"/>
    <property type="match status" value="1"/>
</dbReference>
<dbReference type="SMART" id="SM00358">
    <property type="entry name" value="DSRM"/>
    <property type="match status" value="1"/>
</dbReference>
<dbReference type="SMART" id="SM00535">
    <property type="entry name" value="RIBOc"/>
    <property type="match status" value="1"/>
</dbReference>
<dbReference type="SUPFAM" id="SSF54768">
    <property type="entry name" value="dsRNA-binding domain-like"/>
    <property type="match status" value="1"/>
</dbReference>
<dbReference type="SUPFAM" id="SSF69065">
    <property type="entry name" value="RNase III domain-like"/>
    <property type="match status" value="1"/>
</dbReference>
<dbReference type="PROSITE" id="PS50137">
    <property type="entry name" value="DS_RBD"/>
    <property type="match status" value="1"/>
</dbReference>
<dbReference type="PROSITE" id="PS00517">
    <property type="entry name" value="RNASE_3_1"/>
    <property type="match status" value="1"/>
</dbReference>
<dbReference type="PROSITE" id="PS50142">
    <property type="entry name" value="RNASE_3_2"/>
    <property type="match status" value="1"/>
</dbReference>
<protein>
    <recommendedName>
        <fullName evidence="1">Ribonuclease 3</fullName>
        <ecNumber evidence="1">3.1.26.3</ecNumber>
    </recommendedName>
    <alternativeName>
        <fullName evidence="1">Ribonuclease III</fullName>
        <shortName evidence="1">RNase III</shortName>
    </alternativeName>
</protein>
<accession>A6VLV8</accession>
<evidence type="ECO:0000255" key="1">
    <source>
        <dbReference type="HAMAP-Rule" id="MF_00104"/>
    </source>
</evidence>
<name>RNC_ACTSZ</name>
<feature type="chain" id="PRO_1000075716" description="Ribonuclease 3">
    <location>
        <begin position="1"/>
        <end position="224"/>
    </location>
</feature>
<feature type="domain" description="RNase III" evidence="1">
    <location>
        <begin position="4"/>
        <end position="126"/>
    </location>
</feature>
<feature type="domain" description="DRBM" evidence="1">
    <location>
        <begin position="153"/>
        <end position="223"/>
    </location>
</feature>
<feature type="active site" evidence="1">
    <location>
        <position position="43"/>
    </location>
</feature>
<feature type="active site" evidence="1">
    <location>
        <position position="115"/>
    </location>
</feature>
<feature type="binding site" evidence="1">
    <location>
        <position position="39"/>
    </location>
    <ligand>
        <name>Mg(2+)</name>
        <dbReference type="ChEBI" id="CHEBI:18420"/>
    </ligand>
</feature>
<feature type="binding site" evidence="1">
    <location>
        <position position="112"/>
    </location>
    <ligand>
        <name>Mg(2+)</name>
        <dbReference type="ChEBI" id="CHEBI:18420"/>
    </ligand>
</feature>
<feature type="binding site" evidence="1">
    <location>
        <position position="115"/>
    </location>
    <ligand>
        <name>Mg(2+)</name>
        <dbReference type="ChEBI" id="CHEBI:18420"/>
    </ligand>
</feature>
<gene>
    <name evidence="1" type="primary">rnc</name>
    <name type="ordered locus">Asuc_0580</name>
</gene>
<sequence length="224" mass="25298">MKHLDRLQHKIGYEFSNLTLLKQALTHRSAAKVHNERLEFLGDAILNLTIGEALYLQFPHCNEGELSRMRATLVREKTLAELAHQFDLGNYMALGAGELKSGGFRRASILADCVEAIIGAMSLDSNLPKTMEIVRRWYEVLLRDIQPGENQKDPKTRLQEYLQGKRLALPAYNVTDIQGEAHCQTFTVECHVENLDRTFVGVAGSRRKAEQVAAEQILKVLDIK</sequence>
<keyword id="KW-0963">Cytoplasm</keyword>
<keyword id="KW-0255">Endonuclease</keyword>
<keyword id="KW-0378">Hydrolase</keyword>
<keyword id="KW-0460">Magnesium</keyword>
<keyword id="KW-0479">Metal-binding</keyword>
<keyword id="KW-0507">mRNA processing</keyword>
<keyword id="KW-0540">Nuclease</keyword>
<keyword id="KW-1185">Reference proteome</keyword>
<keyword id="KW-0694">RNA-binding</keyword>
<keyword id="KW-0698">rRNA processing</keyword>
<keyword id="KW-0699">rRNA-binding</keyword>
<keyword id="KW-0819">tRNA processing</keyword>
<reference key="1">
    <citation type="journal article" date="2010" name="BMC Genomics">
        <title>A genomic perspective on the potential of Actinobacillus succinogenes for industrial succinate production.</title>
        <authorList>
            <person name="McKinlay J.B."/>
            <person name="Laivenieks M."/>
            <person name="Schindler B.D."/>
            <person name="McKinlay A.A."/>
            <person name="Siddaramappa S."/>
            <person name="Challacombe J.F."/>
            <person name="Lowry S.R."/>
            <person name="Clum A."/>
            <person name="Lapidus A.L."/>
            <person name="Burkhart K.B."/>
            <person name="Harkins V."/>
            <person name="Vieille C."/>
        </authorList>
    </citation>
    <scope>NUCLEOTIDE SEQUENCE [LARGE SCALE GENOMIC DNA]</scope>
    <source>
        <strain>ATCC 55618 / DSM 22257 / CCUG 43843 / 130Z</strain>
    </source>
</reference>
<proteinExistence type="inferred from homology"/>
<comment type="function">
    <text evidence="1">Digests double-stranded RNA. Involved in the processing of primary rRNA transcript to yield the immediate precursors to the large and small rRNAs (23S and 16S). Processes some mRNAs, and tRNAs when they are encoded in the rRNA operon. Processes pre-crRNA and tracrRNA of type II CRISPR loci if present in the organism.</text>
</comment>
<comment type="catalytic activity">
    <reaction evidence="1">
        <text>Endonucleolytic cleavage to 5'-phosphomonoester.</text>
        <dbReference type="EC" id="3.1.26.3"/>
    </reaction>
</comment>
<comment type="cofactor">
    <cofactor evidence="1">
        <name>Mg(2+)</name>
        <dbReference type="ChEBI" id="CHEBI:18420"/>
    </cofactor>
</comment>
<comment type="subunit">
    <text evidence="1">Homodimer.</text>
</comment>
<comment type="subcellular location">
    <subcellularLocation>
        <location evidence="1">Cytoplasm</location>
    </subcellularLocation>
</comment>
<comment type="similarity">
    <text evidence="1">Belongs to the ribonuclease III family.</text>
</comment>
<organism>
    <name type="scientific">Actinobacillus succinogenes (strain ATCC 55618 / DSM 22257 / CCUG 43843 / 130Z)</name>
    <dbReference type="NCBI Taxonomy" id="339671"/>
    <lineage>
        <taxon>Bacteria</taxon>
        <taxon>Pseudomonadati</taxon>
        <taxon>Pseudomonadota</taxon>
        <taxon>Gammaproteobacteria</taxon>
        <taxon>Pasteurellales</taxon>
        <taxon>Pasteurellaceae</taxon>
        <taxon>Actinobacillus</taxon>
    </lineage>
</organism>